<comment type="alternative products">
    <event type="alternative splicing"/>
    <isoform>
        <id>O15417-1</id>
        <name>1</name>
        <sequence type="displayed"/>
    </isoform>
    <isoform>
        <id>O15417-2</id>
        <name>2</name>
        <sequence type="described" ref="VSP_033126 VSP_033127"/>
    </isoform>
    <isoform>
        <id>O15417-4</id>
        <name>4</name>
        <sequence type="described" ref="VSP_033124 VSP_033128 VSP_033129"/>
    </isoform>
</comment>
<comment type="miscellaneous">
    <molecule>Isoform 2</molecule>
    <text evidence="7">Dubious isoform produced through aberrant splice sites.</text>
</comment>
<gene>
    <name evidence="8" type="primary">TNRC18</name>
    <name type="synonym">CAGL79</name>
    <name type="synonym">KIAA1856</name>
</gene>
<feature type="chain" id="PRO_0000299142" description="Trinucleotide repeat-containing gene 18 protein">
    <location>
        <begin position="1"/>
        <end position="2968"/>
    </location>
</feature>
<feature type="domain" description="BAH" evidence="3">
    <location>
        <begin position="2817"/>
        <end position="2962"/>
    </location>
</feature>
<feature type="region of interest" description="Disordered" evidence="4">
    <location>
        <begin position="1"/>
        <end position="24"/>
    </location>
</feature>
<feature type="region of interest" description="Disordered" evidence="4">
    <location>
        <begin position="139"/>
        <end position="261"/>
    </location>
</feature>
<feature type="region of interest" description="Disordered" evidence="4">
    <location>
        <begin position="304"/>
        <end position="356"/>
    </location>
</feature>
<feature type="region of interest" description="Disordered" evidence="4">
    <location>
        <begin position="381"/>
        <end position="488"/>
    </location>
</feature>
<feature type="region of interest" description="Disordered" evidence="4">
    <location>
        <begin position="612"/>
        <end position="679"/>
    </location>
</feature>
<feature type="region of interest" description="Disordered" evidence="4">
    <location>
        <begin position="941"/>
        <end position="1002"/>
    </location>
</feature>
<feature type="region of interest" description="Disordered" evidence="4">
    <location>
        <begin position="1019"/>
        <end position="1055"/>
    </location>
</feature>
<feature type="region of interest" description="Disordered" evidence="4">
    <location>
        <begin position="1106"/>
        <end position="1190"/>
    </location>
</feature>
<feature type="region of interest" description="Disordered" evidence="4">
    <location>
        <begin position="1212"/>
        <end position="1236"/>
    </location>
</feature>
<feature type="region of interest" description="Disordered" evidence="4">
    <location>
        <begin position="1279"/>
        <end position="1306"/>
    </location>
</feature>
<feature type="region of interest" description="Disordered" evidence="4">
    <location>
        <begin position="1497"/>
        <end position="1566"/>
    </location>
</feature>
<feature type="region of interest" description="Disordered" evidence="4">
    <location>
        <begin position="1687"/>
        <end position="1855"/>
    </location>
</feature>
<feature type="region of interest" description="Disordered" evidence="4">
    <location>
        <begin position="1912"/>
        <end position="2148"/>
    </location>
</feature>
<feature type="region of interest" description="Disordered" evidence="4">
    <location>
        <begin position="2295"/>
        <end position="2771"/>
    </location>
</feature>
<feature type="coiled-coil region" evidence="2">
    <location>
        <begin position="916"/>
        <end position="949"/>
    </location>
</feature>
<feature type="coiled-coil region" evidence="2">
    <location>
        <begin position="1481"/>
        <end position="1516"/>
    </location>
</feature>
<feature type="compositionally biased region" description="Low complexity" evidence="4">
    <location>
        <begin position="139"/>
        <end position="150"/>
    </location>
</feature>
<feature type="compositionally biased region" description="Basic and acidic residues" evidence="4">
    <location>
        <begin position="221"/>
        <end position="233"/>
    </location>
</feature>
<feature type="compositionally biased region" description="Basic and acidic residues" evidence="4">
    <location>
        <begin position="243"/>
        <end position="260"/>
    </location>
</feature>
<feature type="compositionally biased region" description="Basic and acidic residues" evidence="4">
    <location>
        <begin position="304"/>
        <end position="322"/>
    </location>
</feature>
<feature type="compositionally biased region" description="Pro residues" evidence="4">
    <location>
        <begin position="327"/>
        <end position="351"/>
    </location>
</feature>
<feature type="compositionally biased region" description="Basic and acidic residues" evidence="4">
    <location>
        <begin position="395"/>
        <end position="405"/>
    </location>
</feature>
<feature type="compositionally biased region" description="Basic and acidic residues" evidence="4">
    <location>
        <begin position="419"/>
        <end position="431"/>
    </location>
</feature>
<feature type="compositionally biased region" description="Basic and acidic residues" evidence="4">
    <location>
        <begin position="464"/>
        <end position="479"/>
    </location>
</feature>
<feature type="compositionally biased region" description="Basic and acidic residues" evidence="4">
    <location>
        <begin position="651"/>
        <end position="660"/>
    </location>
</feature>
<feature type="compositionally biased region" description="Basic and acidic residues" evidence="4">
    <location>
        <begin position="941"/>
        <end position="955"/>
    </location>
</feature>
<feature type="compositionally biased region" description="Low complexity" evidence="4">
    <location>
        <begin position="966"/>
        <end position="983"/>
    </location>
</feature>
<feature type="compositionally biased region" description="Low complexity" evidence="4">
    <location>
        <begin position="1019"/>
        <end position="1031"/>
    </location>
</feature>
<feature type="compositionally biased region" description="Pro residues" evidence="4">
    <location>
        <begin position="1032"/>
        <end position="1043"/>
    </location>
</feature>
<feature type="compositionally biased region" description="Basic and acidic residues" evidence="4">
    <location>
        <begin position="1046"/>
        <end position="1055"/>
    </location>
</feature>
<feature type="compositionally biased region" description="Basic and acidic residues" evidence="4">
    <location>
        <begin position="1142"/>
        <end position="1162"/>
    </location>
</feature>
<feature type="compositionally biased region" description="Pro residues" evidence="4">
    <location>
        <begin position="1171"/>
        <end position="1181"/>
    </location>
</feature>
<feature type="compositionally biased region" description="Basic and acidic residues" evidence="4">
    <location>
        <begin position="1497"/>
        <end position="1519"/>
    </location>
</feature>
<feature type="compositionally biased region" description="Basic residues" evidence="4">
    <location>
        <begin position="1520"/>
        <end position="1534"/>
    </location>
</feature>
<feature type="compositionally biased region" description="Low complexity" evidence="4">
    <location>
        <begin position="1549"/>
        <end position="1563"/>
    </location>
</feature>
<feature type="compositionally biased region" description="Acidic residues" evidence="4">
    <location>
        <begin position="1816"/>
        <end position="1842"/>
    </location>
</feature>
<feature type="compositionally biased region" description="Basic and acidic residues" evidence="4">
    <location>
        <begin position="1957"/>
        <end position="1968"/>
    </location>
</feature>
<feature type="compositionally biased region" description="Basic and acidic residues" evidence="4">
    <location>
        <begin position="1993"/>
        <end position="2004"/>
    </location>
</feature>
<feature type="compositionally biased region" description="Low complexity" evidence="4">
    <location>
        <begin position="2007"/>
        <end position="2024"/>
    </location>
</feature>
<feature type="compositionally biased region" description="Basic and acidic residues" evidence="4">
    <location>
        <begin position="2034"/>
        <end position="2046"/>
    </location>
</feature>
<feature type="compositionally biased region" description="Low complexity" evidence="4">
    <location>
        <begin position="2069"/>
        <end position="2085"/>
    </location>
</feature>
<feature type="compositionally biased region" description="Basic and acidic residues" evidence="4">
    <location>
        <begin position="2093"/>
        <end position="2103"/>
    </location>
</feature>
<feature type="compositionally biased region" description="Basic and acidic residues" evidence="4">
    <location>
        <begin position="2307"/>
        <end position="2316"/>
    </location>
</feature>
<feature type="compositionally biased region" description="Basic residues" evidence="4">
    <location>
        <begin position="2329"/>
        <end position="2338"/>
    </location>
</feature>
<feature type="compositionally biased region" description="Low complexity" evidence="4">
    <location>
        <begin position="2365"/>
        <end position="2374"/>
    </location>
</feature>
<feature type="compositionally biased region" description="Basic and acidic residues" evidence="4">
    <location>
        <begin position="2375"/>
        <end position="2384"/>
    </location>
</feature>
<feature type="compositionally biased region" description="Pro residues" evidence="4">
    <location>
        <begin position="2390"/>
        <end position="2401"/>
    </location>
</feature>
<feature type="compositionally biased region" description="Low complexity" evidence="4">
    <location>
        <begin position="2411"/>
        <end position="2433"/>
    </location>
</feature>
<feature type="compositionally biased region" description="Basic and acidic residues" evidence="4">
    <location>
        <begin position="2441"/>
        <end position="2468"/>
    </location>
</feature>
<feature type="compositionally biased region" description="Basic and acidic residues" evidence="4">
    <location>
        <begin position="2477"/>
        <end position="2487"/>
    </location>
</feature>
<feature type="compositionally biased region" description="Low complexity" evidence="4">
    <location>
        <begin position="2559"/>
        <end position="2580"/>
    </location>
</feature>
<feature type="compositionally biased region" description="Low complexity" evidence="4">
    <location>
        <begin position="2603"/>
        <end position="2671"/>
    </location>
</feature>
<feature type="compositionally biased region" description="Acidic residues" evidence="4">
    <location>
        <begin position="2673"/>
        <end position="2685"/>
    </location>
</feature>
<feature type="compositionally biased region" description="Pro residues" evidence="4">
    <location>
        <begin position="2723"/>
        <end position="2736"/>
    </location>
</feature>
<feature type="modified residue" description="Phosphoserine" evidence="9 12">
    <location>
        <position position="263"/>
    </location>
</feature>
<feature type="modified residue" description="Phosphoserine" evidence="1">
    <location>
        <position position="611"/>
    </location>
</feature>
<feature type="modified residue" description="Phosphoserine" evidence="12">
    <location>
        <position position="1127"/>
    </location>
</feature>
<feature type="modified residue" description="Phosphoserine" evidence="12">
    <location>
        <position position="1136"/>
    </location>
</feature>
<feature type="modified residue" description="Phosphoserine" evidence="12">
    <location>
        <position position="1540"/>
    </location>
</feature>
<feature type="modified residue" description="Phosphoserine" evidence="10 11 12">
    <location>
        <position position="1857"/>
    </location>
</feature>
<feature type="modified residue" description="Phosphoserine" evidence="11">
    <location>
        <position position="1863"/>
    </location>
</feature>
<feature type="modified residue" description="Phosphothreonine" evidence="12 13">
    <location>
        <position position="2146"/>
    </location>
</feature>
<feature type="modified residue" description="Phosphoserine" evidence="12">
    <location>
        <position position="2771"/>
    </location>
</feature>
<feature type="cross-link" description="Glycyl lysine isopeptide (Lys-Gly) (interchain with G-Cter in SUMO2)" evidence="14">
    <location>
        <position position="620"/>
    </location>
</feature>
<feature type="splice variant" id="VSP_033124" description="In isoform 4." evidence="6">
    <location>
        <begin position="1"/>
        <end position="1164"/>
    </location>
</feature>
<feature type="splice variant" id="VSP_033128" description="In isoform 4." evidence="6">
    <original>QEMGGAERALVARPSLESLLAAGSHMLREVLDGPVVDPLKNLRLPRELKPNKKYSWMRKKEERMYAMKSSLEDMDA</original>
    <variation>PPQGLPPCMGQGSPMPAGLPDCARGPAPTLSGWPRLGEQSRVGLQPGVSVKGTRWRGPGTGPPWSKPSHYRKPQWC</variation>
    <location>
        <begin position="1403"/>
        <end position="1478"/>
    </location>
</feature>
<feature type="splice variant" id="VSP_033129" description="In isoform 4." evidence="6">
    <location>
        <begin position="1479"/>
        <end position="2968"/>
    </location>
</feature>
<feature type="splice variant" id="VSP_033126" description="In isoform 2." evidence="5">
    <original>HASSLTAAKRSKAKAKGKEVKKENRGKGGAVSKLMESMAAEEDFEPNQDSSFSEDEHLPRGGAVERPLTPAPRSCIIDKDELKDGLRVLIPMDDKLLYAGHVQTVHSPDIYRVVVEGERGNRPHIYCLEQLLQEAIIDVRPASTRFLPQGTRIAAYWSQQYRCLYPGTVVRGLLDLEDD</original>
    <variation>PPPPPPPPHPPLPPPPLPPPPLPLRLPPLPPPPLPRPHPPPPPPLPPLLPPPQTRTLPAARTMRQPPPPRLALPRRRRSPPRPPSRPARRGPRPTPQARRRPRPSPRRLLRSPHSLCSPRLRPGPRADPRRERASTSPPPRSWPSGSACRPWRTGPRSPPSCQPGSSGSGSASPPSGVA</variation>
    <location>
        <begin position="2078"/>
        <end position="2256"/>
    </location>
</feature>
<feature type="splice variant" id="VSP_033127" description="In isoform 2." evidence="5">
    <location>
        <begin position="2257"/>
        <end position="2968"/>
    </location>
</feature>
<feature type="sequence variant" id="VAR_042722" description="In dbSNP:rs12671708.">
    <original>A</original>
    <variation>G</variation>
    <location>
        <position position="1193"/>
    </location>
</feature>
<feature type="sequence conflict" description="In Ref. 1; BAB55047." evidence="7" ref="1">
    <original>V</original>
    <variation>A</variation>
    <location>
        <position position="1255"/>
    </location>
</feature>
<feature type="sequence conflict" description="In Ref. 3; BAB47485." evidence="7" ref="3">
    <original>A</original>
    <variation>G</variation>
    <location>
        <position position="1267"/>
    </location>
</feature>
<feature type="sequence conflict" description="In Ref. 1; BAB55047." evidence="7" ref="1">
    <original>N</original>
    <variation>S</variation>
    <location>
        <position position="1343"/>
    </location>
</feature>
<feature type="sequence conflict" description="In Ref. 4; AAB91447." evidence="7" ref="4">
    <original>S</original>
    <variation>P</variation>
    <location>
        <position position="2292"/>
    </location>
</feature>
<feature type="sequence conflict" description="In Ref. 4; AAB91447." evidence="7" ref="4">
    <original>P</original>
    <variation>S</variation>
    <location>
        <position position="2411"/>
    </location>
</feature>
<feature type="sequence conflict" description="In Ref. 4; AAB91447." evidence="7" ref="4">
    <original>A</original>
    <variation>V</variation>
    <location>
        <position position="2547"/>
    </location>
</feature>
<feature type="strand" evidence="15">
    <location>
        <begin position="2795"/>
        <end position="2799"/>
    </location>
</feature>
<feature type="strand" evidence="15">
    <location>
        <begin position="2806"/>
        <end position="2814"/>
    </location>
</feature>
<feature type="strand" evidence="15">
    <location>
        <begin position="2817"/>
        <end position="2820"/>
    </location>
</feature>
<feature type="strand" evidence="15">
    <location>
        <begin position="2824"/>
        <end position="2827"/>
    </location>
</feature>
<feature type="strand" evidence="15">
    <location>
        <begin position="2837"/>
        <end position="2847"/>
    </location>
</feature>
<feature type="turn" evidence="15">
    <location>
        <begin position="2848"/>
        <end position="2850"/>
    </location>
</feature>
<feature type="strand" evidence="15">
    <location>
        <begin position="2851"/>
        <end position="2860"/>
    </location>
</feature>
<feature type="helix" evidence="15">
    <location>
        <begin position="2862"/>
        <end position="2864"/>
    </location>
</feature>
<feature type="turn" evidence="15">
    <location>
        <begin position="2866"/>
        <end position="2871"/>
    </location>
</feature>
<feature type="helix" evidence="15">
    <location>
        <begin position="2890"/>
        <end position="2893"/>
    </location>
</feature>
<feature type="helix" evidence="15">
    <location>
        <begin position="2898"/>
        <end position="2901"/>
    </location>
</feature>
<feature type="strand" evidence="15">
    <location>
        <begin position="2902"/>
        <end position="2913"/>
    </location>
</feature>
<feature type="helix" evidence="15">
    <location>
        <begin position="2914"/>
        <end position="2916"/>
    </location>
</feature>
<feature type="strand" evidence="15">
    <location>
        <begin position="2917"/>
        <end position="2924"/>
    </location>
</feature>
<feature type="helix" evidence="15">
    <location>
        <begin position="2926"/>
        <end position="2933"/>
    </location>
</feature>
<feature type="strand" evidence="15">
    <location>
        <begin position="2935"/>
        <end position="2938"/>
    </location>
</feature>
<feature type="strand" evidence="15">
    <location>
        <begin position="2944"/>
        <end position="2951"/>
    </location>
</feature>
<feature type="turn" evidence="15">
    <location>
        <begin position="2953"/>
        <end position="2955"/>
    </location>
</feature>
<keyword id="KW-0002">3D-structure</keyword>
<keyword id="KW-0025">Alternative splicing</keyword>
<keyword id="KW-0175">Coiled coil</keyword>
<keyword id="KW-1017">Isopeptide bond</keyword>
<keyword id="KW-0597">Phosphoprotein</keyword>
<keyword id="KW-1267">Proteomics identification</keyword>
<keyword id="KW-1185">Reference proteome</keyword>
<keyword id="KW-0832">Ubl conjugation</keyword>
<evidence type="ECO:0000250" key="1">
    <source>
        <dbReference type="UniProtKB" id="Q80WC3"/>
    </source>
</evidence>
<evidence type="ECO:0000255" key="2"/>
<evidence type="ECO:0000255" key="3">
    <source>
        <dbReference type="PROSITE-ProRule" id="PRU00370"/>
    </source>
</evidence>
<evidence type="ECO:0000256" key="4">
    <source>
        <dbReference type="SAM" id="MobiDB-lite"/>
    </source>
</evidence>
<evidence type="ECO:0000303" key="5">
    <source>
    </source>
</evidence>
<evidence type="ECO:0000303" key="6">
    <source>
    </source>
</evidence>
<evidence type="ECO:0000305" key="7"/>
<evidence type="ECO:0000312" key="8">
    <source>
        <dbReference type="HGNC" id="HGNC:11962"/>
    </source>
</evidence>
<evidence type="ECO:0007744" key="9">
    <source>
    </source>
</evidence>
<evidence type="ECO:0007744" key="10">
    <source>
    </source>
</evidence>
<evidence type="ECO:0007744" key="11">
    <source>
    </source>
</evidence>
<evidence type="ECO:0007744" key="12">
    <source>
    </source>
</evidence>
<evidence type="ECO:0007744" key="13">
    <source>
    </source>
</evidence>
<evidence type="ECO:0007744" key="14">
    <source>
    </source>
</evidence>
<evidence type="ECO:0007829" key="15">
    <source>
        <dbReference type="PDB" id="8DS8"/>
    </source>
</evidence>
<name>TNC18_HUMAN</name>
<reference key="1">
    <citation type="journal article" date="2004" name="Nat. Genet.">
        <title>Complete sequencing and characterization of 21,243 full-length human cDNAs.</title>
        <authorList>
            <person name="Ota T."/>
            <person name="Suzuki Y."/>
            <person name="Nishikawa T."/>
            <person name="Otsuki T."/>
            <person name="Sugiyama T."/>
            <person name="Irie R."/>
            <person name="Wakamatsu A."/>
            <person name="Hayashi K."/>
            <person name="Sato H."/>
            <person name="Nagai K."/>
            <person name="Kimura K."/>
            <person name="Makita H."/>
            <person name="Sekine M."/>
            <person name="Obayashi M."/>
            <person name="Nishi T."/>
            <person name="Shibahara T."/>
            <person name="Tanaka T."/>
            <person name="Ishii S."/>
            <person name="Yamamoto J."/>
            <person name="Saito K."/>
            <person name="Kawai Y."/>
            <person name="Isono Y."/>
            <person name="Nakamura Y."/>
            <person name="Nagahari K."/>
            <person name="Murakami K."/>
            <person name="Yasuda T."/>
            <person name="Iwayanagi T."/>
            <person name="Wagatsuma M."/>
            <person name="Shiratori A."/>
            <person name="Sudo H."/>
            <person name="Hosoiri T."/>
            <person name="Kaku Y."/>
            <person name="Kodaira H."/>
            <person name="Kondo H."/>
            <person name="Sugawara M."/>
            <person name="Takahashi M."/>
            <person name="Kanda K."/>
            <person name="Yokoi T."/>
            <person name="Furuya T."/>
            <person name="Kikkawa E."/>
            <person name="Omura Y."/>
            <person name="Abe K."/>
            <person name="Kamihara K."/>
            <person name="Katsuta N."/>
            <person name="Sato K."/>
            <person name="Tanikawa M."/>
            <person name="Yamazaki M."/>
            <person name="Ninomiya K."/>
            <person name="Ishibashi T."/>
            <person name="Yamashita H."/>
            <person name="Murakawa K."/>
            <person name="Fujimori K."/>
            <person name="Tanai H."/>
            <person name="Kimata M."/>
            <person name="Watanabe M."/>
            <person name="Hiraoka S."/>
            <person name="Chiba Y."/>
            <person name="Ishida S."/>
            <person name="Ono Y."/>
            <person name="Takiguchi S."/>
            <person name="Watanabe S."/>
            <person name="Yosida M."/>
            <person name="Hotuta T."/>
            <person name="Kusano J."/>
            <person name="Kanehori K."/>
            <person name="Takahashi-Fujii A."/>
            <person name="Hara H."/>
            <person name="Tanase T.-O."/>
            <person name="Nomura Y."/>
            <person name="Togiya S."/>
            <person name="Komai F."/>
            <person name="Hara R."/>
            <person name="Takeuchi K."/>
            <person name="Arita M."/>
            <person name="Imose N."/>
            <person name="Musashino K."/>
            <person name="Yuuki H."/>
            <person name="Oshima A."/>
            <person name="Sasaki N."/>
            <person name="Aotsuka S."/>
            <person name="Yoshikawa Y."/>
            <person name="Matsunawa H."/>
            <person name="Ichihara T."/>
            <person name="Shiohata N."/>
            <person name="Sano S."/>
            <person name="Moriya S."/>
            <person name="Momiyama H."/>
            <person name="Satoh N."/>
            <person name="Takami S."/>
            <person name="Terashima Y."/>
            <person name="Suzuki O."/>
            <person name="Nakagawa S."/>
            <person name="Senoh A."/>
            <person name="Mizoguchi H."/>
            <person name="Goto Y."/>
            <person name="Shimizu F."/>
            <person name="Wakebe H."/>
            <person name="Hishigaki H."/>
            <person name="Watanabe T."/>
            <person name="Sugiyama A."/>
            <person name="Takemoto M."/>
            <person name="Kawakami B."/>
            <person name="Yamazaki M."/>
            <person name="Watanabe K."/>
            <person name="Kumagai A."/>
            <person name="Itakura S."/>
            <person name="Fukuzumi Y."/>
            <person name="Fujimori Y."/>
            <person name="Komiyama M."/>
            <person name="Tashiro H."/>
            <person name="Tanigami A."/>
            <person name="Fujiwara T."/>
            <person name="Ono T."/>
            <person name="Yamada K."/>
            <person name="Fujii Y."/>
            <person name="Ozaki K."/>
            <person name="Hirao M."/>
            <person name="Ohmori Y."/>
            <person name="Kawabata A."/>
            <person name="Hikiji T."/>
            <person name="Kobatake N."/>
            <person name="Inagaki H."/>
            <person name="Ikema Y."/>
            <person name="Okamoto S."/>
            <person name="Okitani R."/>
            <person name="Kawakami T."/>
            <person name="Noguchi S."/>
            <person name="Itoh T."/>
            <person name="Shigeta K."/>
            <person name="Senba T."/>
            <person name="Matsumura K."/>
            <person name="Nakajima Y."/>
            <person name="Mizuno T."/>
            <person name="Morinaga M."/>
            <person name="Sasaki M."/>
            <person name="Togashi T."/>
            <person name="Oyama M."/>
            <person name="Hata H."/>
            <person name="Watanabe M."/>
            <person name="Komatsu T."/>
            <person name="Mizushima-Sugano J."/>
            <person name="Satoh T."/>
            <person name="Shirai Y."/>
            <person name="Takahashi Y."/>
            <person name="Nakagawa K."/>
            <person name="Okumura K."/>
            <person name="Nagase T."/>
            <person name="Nomura N."/>
            <person name="Kikuchi H."/>
            <person name="Masuho Y."/>
            <person name="Yamashita R."/>
            <person name="Nakai K."/>
            <person name="Yada T."/>
            <person name="Nakamura Y."/>
            <person name="Ohara O."/>
            <person name="Isogai T."/>
            <person name="Sugano S."/>
        </authorList>
    </citation>
    <scope>NUCLEOTIDE SEQUENCE [LARGE SCALE MRNA] (ISOFORM 4)</scope>
    <source>
        <tissue>Embryo</tissue>
    </source>
</reference>
<reference key="2">
    <citation type="journal article" date="2003" name="Nature">
        <title>The DNA sequence of human chromosome 7.</title>
        <authorList>
            <person name="Hillier L.W."/>
            <person name="Fulton R.S."/>
            <person name="Fulton L.A."/>
            <person name="Graves T.A."/>
            <person name="Pepin K.H."/>
            <person name="Wagner-McPherson C."/>
            <person name="Layman D."/>
            <person name="Maas J."/>
            <person name="Jaeger S."/>
            <person name="Walker R."/>
            <person name="Wylie K."/>
            <person name="Sekhon M."/>
            <person name="Becker M.C."/>
            <person name="O'Laughlin M.D."/>
            <person name="Schaller M.E."/>
            <person name="Fewell G.A."/>
            <person name="Delehaunty K.D."/>
            <person name="Miner T.L."/>
            <person name="Nash W.E."/>
            <person name="Cordes M."/>
            <person name="Du H."/>
            <person name="Sun H."/>
            <person name="Edwards J."/>
            <person name="Bradshaw-Cordum H."/>
            <person name="Ali J."/>
            <person name="Andrews S."/>
            <person name="Isak A."/>
            <person name="Vanbrunt A."/>
            <person name="Nguyen C."/>
            <person name="Du F."/>
            <person name="Lamar B."/>
            <person name="Courtney L."/>
            <person name="Kalicki J."/>
            <person name="Ozersky P."/>
            <person name="Bielicki L."/>
            <person name="Scott K."/>
            <person name="Holmes A."/>
            <person name="Harkins R."/>
            <person name="Harris A."/>
            <person name="Strong C.M."/>
            <person name="Hou S."/>
            <person name="Tomlinson C."/>
            <person name="Dauphin-Kohlberg S."/>
            <person name="Kozlowicz-Reilly A."/>
            <person name="Leonard S."/>
            <person name="Rohlfing T."/>
            <person name="Rock S.M."/>
            <person name="Tin-Wollam A.-M."/>
            <person name="Abbott A."/>
            <person name="Minx P."/>
            <person name="Maupin R."/>
            <person name="Strowmatt C."/>
            <person name="Latreille P."/>
            <person name="Miller N."/>
            <person name="Johnson D."/>
            <person name="Murray J."/>
            <person name="Woessner J.P."/>
            <person name="Wendl M.C."/>
            <person name="Yang S.-P."/>
            <person name="Schultz B.R."/>
            <person name="Wallis J.W."/>
            <person name="Spieth J."/>
            <person name="Bieri T.A."/>
            <person name="Nelson J.O."/>
            <person name="Berkowicz N."/>
            <person name="Wohldmann P.E."/>
            <person name="Cook L.L."/>
            <person name="Hickenbotham M.T."/>
            <person name="Eldred J."/>
            <person name="Williams D."/>
            <person name="Bedell J.A."/>
            <person name="Mardis E.R."/>
            <person name="Clifton S.W."/>
            <person name="Chissoe S.L."/>
            <person name="Marra M.A."/>
            <person name="Raymond C."/>
            <person name="Haugen E."/>
            <person name="Gillett W."/>
            <person name="Zhou Y."/>
            <person name="James R."/>
            <person name="Phelps K."/>
            <person name="Iadanoto S."/>
            <person name="Bubb K."/>
            <person name="Simms E."/>
            <person name="Levy R."/>
            <person name="Clendenning J."/>
            <person name="Kaul R."/>
            <person name="Kent W.J."/>
            <person name="Furey T.S."/>
            <person name="Baertsch R.A."/>
            <person name="Brent M.R."/>
            <person name="Keibler E."/>
            <person name="Flicek P."/>
            <person name="Bork P."/>
            <person name="Suyama M."/>
            <person name="Bailey J.A."/>
            <person name="Portnoy M.E."/>
            <person name="Torrents D."/>
            <person name="Chinwalla A.T."/>
            <person name="Gish W.R."/>
            <person name="Eddy S.R."/>
            <person name="McPherson J.D."/>
            <person name="Olson M.V."/>
            <person name="Eichler E.E."/>
            <person name="Green E.D."/>
            <person name="Waterston R.H."/>
            <person name="Wilson R.K."/>
        </authorList>
    </citation>
    <scope>NUCLEOTIDE SEQUENCE [LARGE SCALE GENOMIC DNA]</scope>
</reference>
<reference key="3">
    <citation type="journal article" date="2001" name="DNA Res.">
        <title>Prediction of the coding sequences of unidentified human genes. XX. The complete sequences of 100 new cDNA clones from brain which code for large proteins in vitro.</title>
        <authorList>
            <person name="Nagase T."/>
            <person name="Nakayama M."/>
            <person name="Nakajima D."/>
            <person name="Kikuno R."/>
            <person name="Ohara O."/>
        </authorList>
    </citation>
    <scope>NUCLEOTIDE SEQUENCE [LARGE SCALE MRNA] OF 1123-2968 (ISOFORM 2)</scope>
    <source>
        <tissue>Brain</tissue>
    </source>
</reference>
<reference key="4">
    <citation type="journal article" date="1997" name="Hum. Genet.">
        <title>cDNAs with long CAG trinucleotide repeats from human brain.</title>
        <authorList>
            <person name="Margolis R.L."/>
            <person name="Abraham M.R."/>
            <person name="Gatchell S.B."/>
            <person name="Li S.-H."/>
            <person name="Kidwai A.S."/>
            <person name="Breschel T.S."/>
            <person name="Stine O.C."/>
            <person name="Callahan C."/>
            <person name="McInnis M.G."/>
            <person name="Ross C.A."/>
        </authorList>
    </citation>
    <scope>NUCLEOTIDE SEQUENCE [MRNA] OF 2181-2593 (ISOFORM 1)</scope>
    <source>
        <tissue>Brain</tissue>
    </source>
</reference>
<reference key="5">
    <citation type="journal article" date="2008" name="Proc. Natl. Acad. Sci. U.S.A.">
        <title>A quantitative atlas of mitotic phosphorylation.</title>
        <authorList>
            <person name="Dephoure N."/>
            <person name="Zhou C."/>
            <person name="Villen J."/>
            <person name="Beausoleil S.A."/>
            <person name="Bakalarski C.E."/>
            <person name="Elledge S.J."/>
            <person name="Gygi S.P."/>
        </authorList>
    </citation>
    <scope>PHOSPHORYLATION [LARGE SCALE ANALYSIS] AT SER-263</scope>
    <scope>IDENTIFICATION BY MASS SPECTROMETRY [LARGE SCALE ANALYSIS]</scope>
    <source>
        <tissue>Cervix carcinoma</tissue>
    </source>
</reference>
<reference key="6">
    <citation type="journal article" date="2009" name="Sci. Signal.">
        <title>Quantitative phosphoproteomic analysis of T cell receptor signaling reveals system-wide modulation of protein-protein interactions.</title>
        <authorList>
            <person name="Mayya V."/>
            <person name="Lundgren D.H."/>
            <person name="Hwang S.-I."/>
            <person name="Rezaul K."/>
            <person name="Wu L."/>
            <person name="Eng J.K."/>
            <person name="Rodionov V."/>
            <person name="Han D.K."/>
        </authorList>
    </citation>
    <scope>PHOSPHORYLATION [LARGE SCALE ANALYSIS] AT SER-1857</scope>
    <scope>IDENTIFICATION BY MASS SPECTROMETRY [LARGE SCALE ANALYSIS]</scope>
    <source>
        <tissue>Leukemic T-cell</tissue>
    </source>
</reference>
<reference key="7">
    <citation type="journal article" date="2010" name="Sci. Signal.">
        <title>Quantitative phosphoproteomics reveals widespread full phosphorylation site occupancy during mitosis.</title>
        <authorList>
            <person name="Olsen J.V."/>
            <person name="Vermeulen M."/>
            <person name="Santamaria A."/>
            <person name="Kumar C."/>
            <person name="Miller M.L."/>
            <person name="Jensen L.J."/>
            <person name="Gnad F."/>
            <person name="Cox J."/>
            <person name="Jensen T.S."/>
            <person name="Nigg E.A."/>
            <person name="Brunak S."/>
            <person name="Mann M."/>
        </authorList>
    </citation>
    <scope>PHOSPHORYLATION [LARGE SCALE ANALYSIS] AT SER-1857 AND SER-1863</scope>
    <scope>IDENTIFICATION BY MASS SPECTROMETRY [LARGE SCALE ANALYSIS]</scope>
    <source>
        <tissue>Cervix carcinoma</tissue>
    </source>
</reference>
<reference key="8">
    <citation type="journal article" date="2013" name="J. Proteome Res.">
        <title>Toward a comprehensive characterization of a human cancer cell phosphoproteome.</title>
        <authorList>
            <person name="Zhou H."/>
            <person name="Di Palma S."/>
            <person name="Preisinger C."/>
            <person name="Peng M."/>
            <person name="Polat A.N."/>
            <person name="Heck A.J."/>
            <person name="Mohammed S."/>
        </authorList>
    </citation>
    <scope>PHOSPHORYLATION [LARGE SCALE ANALYSIS] AT SER-263; SER-1127; SER-1136; SER-1540; SER-1857; THR-2146 AND SER-2771</scope>
    <scope>IDENTIFICATION BY MASS SPECTROMETRY [LARGE SCALE ANALYSIS]</scope>
    <source>
        <tissue>Cervix carcinoma</tissue>
        <tissue>Erythroleukemia</tissue>
    </source>
</reference>
<reference key="9">
    <citation type="journal article" date="2014" name="J. Proteomics">
        <title>An enzyme assisted RP-RPLC approach for in-depth analysis of human liver phosphoproteome.</title>
        <authorList>
            <person name="Bian Y."/>
            <person name="Song C."/>
            <person name="Cheng K."/>
            <person name="Dong M."/>
            <person name="Wang F."/>
            <person name="Huang J."/>
            <person name="Sun D."/>
            <person name="Wang L."/>
            <person name="Ye M."/>
            <person name="Zou H."/>
        </authorList>
    </citation>
    <scope>PHOSPHORYLATION [LARGE SCALE ANALYSIS] AT THR-2146</scope>
    <scope>IDENTIFICATION BY MASS SPECTROMETRY [LARGE SCALE ANALYSIS]</scope>
    <source>
        <tissue>Liver</tissue>
    </source>
</reference>
<reference key="10">
    <citation type="journal article" date="2017" name="Nat. Struct. Mol. Biol.">
        <title>Site-specific mapping of the human SUMO proteome reveals co-modification with phosphorylation.</title>
        <authorList>
            <person name="Hendriks I.A."/>
            <person name="Lyon D."/>
            <person name="Young C."/>
            <person name="Jensen L.J."/>
            <person name="Vertegaal A.C."/>
            <person name="Nielsen M.L."/>
        </authorList>
    </citation>
    <scope>SUMOYLATION [LARGE SCALE ANALYSIS] AT LYS-620</scope>
    <scope>IDENTIFICATION BY MASS SPECTROMETRY [LARGE SCALE ANALYSIS]</scope>
</reference>
<protein>
    <recommendedName>
        <fullName evidence="7">Trinucleotide repeat-containing gene 18 protein</fullName>
    </recommendedName>
    <alternativeName>
        <fullName>Long CAG trinucleotide repeat-containing gene 79 protein</fullName>
    </alternativeName>
</protein>
<sequence length="2968" mass="314519">MDGRDFGPQRSVHGPPPPLLSGLAMDSHRVGAATAGRLPASGLPGPLPPGKYMAGLNLHPHPGEAFLGSFVASGMGPSASSHGSPVPLPSDLSFRSPTPSNLPMVQLWAAHAHEGFSHLPSGLYPSYLHLNHLEPPSSGSPLLSQLGQPSIFDTQKGQGPGGDGFYLPTAGAPGSLHSHAPSARTPGGGHSSGAPAKGSSSRDGPAKERAGRGGEPPPLFGKKDPRARGEEASGPRGVVDLTQEARAEGRQDRGPPRLAERLSPFLAESKTKNAALQPSVLTMCNGGAGDVGLPALVAEAGRGGAKEAARQDEGARLLRRTETLLPGPRPCPSPLPPPPAPPKGPPAPPAATPAGVYTVFREQGREHRVVAPTFVPSVEAFDERPGPIQIASQARDARAREREAGRPGVLQAPPGSPRPLDRPEGLREKNSVIRSLKRPPPADAPTVRATRASPDPRAYVPAKELLKPEADPRPCERAPRGPAGPAAQQAAKLFGLEPGRPPPTGPEHKWKPFELGNFAATQMAVLAAQHHHSRAEEEAAVVAASSSKKAYLDPGAVLPRSAATCGRPVADMHSAAHGSGEASAMQSLIKYSGSFARDAVAVRPGGCGKKSPFGGLGTMKPEPAPTSAGASRAQARLPHSGGPAAGGGRQLKRDPERPESAKAFGREGSGAQGEAEVRHPPVGIAVAVARQKDSGGSGRLGPGLVDQERSLSLSNVKGHGRADEDCVDDRARHREERLLGARLDRDQEKLLRESKELADLARLHPTSCAPNGLNPNLMVTGGPALAGSGRWSADPAAHLATHPWLPRSGNASMWLAGHPYGLGPPSLHQGMAPAFPPGLGGSLPSAYQFVRDPQSGQLVVIPSDHLPHFAELMERATVPPLWPALYPPGRSPLHHAQQLQLFSQQHFLRQQEFLYLQQQAAQALELQRSAQLVQERLKAQEHRAEMEEKGSKRGLEAAGKAGLATAGPGLLPRKPPGLAAGPAGTYGKAVSPPPSPRASPVAALKAKVIQKLEDVSKPPAYAYPATPSSHPTSPPPASPPPTPGITRKEEAPENVVEKKDLELEKEAPSPFQALFSDIPPRYPFQALPPHYGRPYPFLLQPTAAADADGLAPDVPLPADGPERLALSPEDKPIRLSPSKITEPLREGPEEEPLAEREVKAEVEDMDEGPTELPPLESPLPLPAAEAMATPSPAGGCGGGLLEAQALSATGQSCAEPSECPDFVEGPEPRVDSPGRTEPCTAALDLGVQLTPETLVEAKEEPVEVPVAVPVVEAVPEEGLAQVAPSESQPTLEMSDCDVPAGEGQCPSLEPQEAVPVLGSTCFLEEASSDQFLPSLEDPLAGMNALAAAAELPQARPLPSPGAAGAQALEKLEAAESLVLEQSFLHGITLLSEIAELELERRSQEMGGAERALVARPSLESLLAAGSHMLREVLDGPVVDPLKNLRLPRELKPNKKYSWMRKKEERMYAMKSSLEDMDALELDFRMRLAEVQRQYKEKQRELVKLQRRRDSEDRREEPHRSLARRGPGRPRKRTHAPSALSPPRKRGKSGHSSGKLSSKSLLTSDDYELGAGIRKRHKGSEEEHDALIGMGKARGRNQTWDEHEASSDFISQLKIKKKKMASDQEQLASKLDKALSLTKQDKLKSPFKFSDSAGGKSKTSGGCGRYLTPYDSLLGKNRKALAKGLGLSLKSSREGKHKRAAKTRKMEVGFKARGQPKSAHSPFASEVSSYSYNTDSEEDEEFLKDEWPAQGPSSSKLTPSLLCSMVAKNSKAAGGPKLTKRGLAAPRTLKPKPATSRKQPFCLLLREAEARSSFSDSSEESFDQDESSEEEDEEEELEEEDEASGGGYRLGARERALSPGLEESGLGLLARFAASALPSPTVGPSLSVVQLEAKQKARKKEERQSLLGTEFEYTDSESEVKVRKRSPAGLLRPKKGLGEPGPSLAAPTPGARGPDPSSPDKAKLAVEKGRKARKLRGPKEPGFEAGPEASDDDLWTRRRSERIFLHDASAAAPAPVSTAPATKTSRCAKGGPLSPRKDAGRAKDRKDPRKKKKGKEAGPGAGLPPPRAPALPSEARAPHASSLTAAKRSKAKAKGKEVKKENRGKGGAVSKLMESMAAEEDFEPNQDSSFSEDEHLPRGGAVERPLTPAPRSCIIDKDELKDGLRVLIPMDDKLLYAGHVQTVHSPDIYRVVVEGERGNRPHIYCLEQLLQEAIIDVRPASTRFLPQGTRIAAYWSQQYRCLYPGTVVRGLLDLEDDGDLITVEFDDGDTGRIPLSHIRLLPPDYKIQCAEPSPALLVPSAKRRSRKTSKDTGEGKDGGTAGSEEPGAKARGRGRKPSAKAKGDRAATLEEGNPTDEVPSTPLALEPSSTPGSKKSPPEPVDKRAKAPKARPAPPQPSPAPPAFTSCPAPEPFAELPAPATSLAPAPLITMPATRPKPKKARAAEESGAKGPRRPGEEAELLVKLDHEGVTSPKSKKAKEALLLREDPGAGGWQEPKSLLSLGSYPPAAGSSEPKAPWPKATDGDLAQEPGPGLTFEDSGNPKSPDKAQAEQDGAEESESSSSSSSGSSSSSSSSSSSGSETEGEEEGDKNGDGGCGTGGRNCSAASSRAASPASSSSSSSSSSSSSSSSSSSSSSSSSSSSSSSSSSSSSSSSSSSSSSSSSSSSSSSSSSTTDEDSSCSSDDEAAPAPTAGPSAQAALPTKATKQAGKARPSAHSPGKKTPAPQPQAPPPQPTQPLQPKAQAGAKSRPKKREGVHLPTTKELAKRQRLPSVENRPKIAAFLPARQLWKWFGKPTQRRGMKGKARKLFYKAIVRGKEMIRIGDCAVFLSAGRPNLPYIGRIQSMWESWGNNMVVRVKWFYHPEETSPGKQFHQGQHWDQKSSRSLPAALRVSSQRKDFMERALYQSSHVDENDVQTVSHKCLVVGLEQYEQMLKTKKYQDSEGLYYLAGTYEPTTGMIFSTDGVPVLC</sequence>
<accession>O15417</accession>
<accession>A8MX41</accession>
<accession>Q96JH1</accession>
<accession>Q96K91</accession>
<dbReference type="EMBL" id="AK027341">
    <property type="protein sequence ID" value="BAB55047.1"/>
    <property type="molecule type" value="mRNA"/>
</dbReference>
<dbReference type="EMBL" id="AC093376">
    <property type="status" value="NOT_ANNOTATED_CDS"/>
    <property type="molecule type" value="Genomic_DNA"/>
</dbReference>
<dbReference type="EMBL" id="AC093620">
    <property type="status" value="NOT_ANNOTATED_CDS"/>
    <property type="molecule type" value="Genomic_DNA"/>
</dbReference>
<dbReference type="EMBL" id="AB058759">
    <property type="protein sequence ID" value="BAB47485.1"/>
    <property type="molecule type" value="mRNA"/>
</dbReference>
<dbReference type="EMBL" id="U80753">
    <property type="protein sequence ID" value="AAB91447.1"/>
    <property type="molecule type" value="mRNA"/>
</dbReference>
<dbReference type="CCDS" id="CCDS47534.1">
    <molecule id="O15417-1"/>
</dbReference>
<dbReference type="RefSeq" id="NP_001073964.2">
    <molecule id="O15417-1"/>
    <property type="nucleotide sequence ID" value="NM_001080495.3"/>
</dbReference>
<dbReference type="RefSeq" id="XP_047276935.1">
    <molecule id="O15417-1"/>
    <property type="nucleotide sequence ID" value="XM_047420979.1"/>
</dbReference>
<dbReference type="PDB" id="8DS8">
    <property type="method" value="X-ray"/>
    <property type="resolution" value="1.84 A"/>
    <property type="chains" value="A/B=2785-2967"/>
</dbReference>
<dbReference type="PDBsum" id="8DS8"/>
<dbReference type="SMR" id="O15417"/>
<dbReference type="BioGRID" id="124158">
    <property type="interactions" value="93"/>
</dbReference>
<dbReference type="FunCoup" id="O15417">
    <property type="interactions" value="2099"/>
</dbReference>
<dbReference type="IntAct" id="O15417">
    <property type="interactions" value="43"/>
</dbReference>
<dbReference type="MINT" id="O15417"/>
<dbReference type="STRING" id="9606.ENSP00000395538"/>
<dbReference type="CarbonylDB" id="O15417"/>
<dbReference type="GlyCosmos" id="O15417">
    <property type="glycosylation" value="1 site, 1 glycan"/>
</dbReference>
<dbReference type="GlyGen" id="O15417">
    <property type="glycosylation" value="12 sites, 1 O-linked glycan (3 sites)"/>
</dbReference>
<dbReference type="iPTMnet" id="O15417"/>
<dbReference type="PhosphoSitePlus" id="O15417"/>
<dbReference type="BioMuta" id="TNRC18"/>
<dbReference type="jPOST" id="O15417"/>
<dbReference type="MassIVE" id="O15417"/>
<dbReference type="PaxDb" id="9606-ENSP00000395538"/>
<dbReference type="PeptideAtlas" id="O15417"/>
<dbReference type="ProteomicsDB" id="48652">
    <molecule id="O15417-1"/>
</dbReference>
<dbReference type="ProteomicsDB" id="48653">
    <molecule id="O15417-2"/>
</dbReference>
<dbReference type="Pumba" id="O15417"/>
<dbReference type="Antibodypedia" id="43721">
    <property type="antibodies" value="21 antibodies from 9 providers"/>
</dbReference>
<dbReference type="Ensembl" id="ENST00000430969.6">
    <molecule id="O15417-1"/>
    <property type="protein sequence ID" value="ENSP00000395538.1"/>
    <property type="gene ID" value="ENSG00000182095.15"/>
</dbReference>
<dbReference type="GeneID" id="84629"/>
<dbReference type="KEGG" id="hsa:84629"/>
<dbReference type="MANE-Select" id="ENST00000430969.6">
    <property type="protein sequence ID" value="ENSP00000395538.1"/>
    <property type="RefSeq nucleotide sequence ID" value="NM_001080495.3"/>
    <property type="RefSeq protein sequence ID" value="NP_001073964.2"/>
</dbReference>
<dbReference type="UCSC" id="uc003soi.5">
    <molecule id="O15417-1"/>
    <property type="organism name" value="human"/>
</dbReference>
<dbReference type="AGR" id="HGNC:11962"/>
<dbReference type="CTD" id="84629"/>
<dbReference type="DisGeNET" id="84629"/>
<dbReference type="GeneCards" id="TNRC18"/>
<dbReference type="HGNC" id="HGNC:11962">
    <property type="gene designation" value="TNRC18"/>
</dbReference>
<dbReference type="HPA" id="ENSG00000182095">
    <property type="expression patterns" value="Low tissue specificity"/>
</dbReference>
<dbReference type="MIM" id="620902">
    <property type="type" value="gene"/>
</dbReference>
<dbReference type="neXtProt" id="NX_O15417"/>
<dbReference type="OpenTargets" id="ENSG00000182095"/>
<dbReference type="PharmGKB" id="PA36649"/>
<dbReference type="VEuPathDB" id="HostDB:ENSG00000182095"/>
<dbReference type="eggNOG" id="KOG1886">
    <property type="taxonomic scope" value="Eukaryota"/>
</dbReference>
<dbReference type="GeneTree" id="ENSGT00940000157099"/>
<dbReference type="InParanoid" id="O15417"/>
<dbReference type="OMA" id="LHDGKHC"/>
<dbReference type="OrthoDB" id="6426227at2759"/>
<dbReference type="PAN-GO" id="O15417">
    <property type="GO annotations" value="0 GO annotations based on evolutionary models"/>
</dbReference>
<dbReference type="PhylomeDB" id="O15417"/>
<dbReference type="TreeFam" id="TF336007"/>
<dbReference type="PathwayCommons" id="O15417"/>
<dbReference type="SignaLink" id="O15417"/>
<dbReference type="BioGRID-ORCS" id="84629">
    <property type="hits" value="24 hits in 1150 CRISPR screens"/>
</dbReference>
<dbReference type="ChiTaRS" id="TNRC18">
    <property type="organism name" value="human"/>
</dbReference>
<dbReference type="GenomeRNAi" id="84629"/>
<dbReference type="Pharos" id="O15417">
    <property type="development level" value="Tdark"/>
</dbReference>
<dbReference type="PRO" id="PR:O15417"/>
<dbReference type="Proteomes" id="UP000005640">
    <property type="component" value="Chromosome 7"/>
</dbReference>
<dbReference type="RNAct" id="O15417">
    <property type="molecule type" value="protein"/>
</dbReference>
<dbReference type="Bgee" id="ENSG00000182095">
    <property type="expression patterns" value="Expressed in sural nerve and 186 other cell types or tissues"/>
</dbReference>
<dbReference type="ExpressionAtlas" id="O15417">
    <property type="expression patterns" value="baseline and differential"/>
</dbReference>
<dbReference type="GO" id="GO:0005829">
    <property type="term" value="C:cytosol"/>
    <property type="evidence" value="ECO:0000314"/>
    <property type="project" value="HPA"/>
</dbReference>
<dbReference type="GO" id="GO:0005739">
    <property type="term" value="C:mitochondrion"/>
    <property type="evidence" value="ECO:0000314"/>
    <property type="project" value="HPA"/>
</dbReference>
<dbReference type="GO" id="GO:0031965">
    <property type="term" value="C:nuclear membrane"/>
    <property type="evidence" value="ECO:0000314"/>
    <property type="project" value="HPA"/>
</dbReference>
<dbReference type="GO" id="GO:0005654">
    <property type="term" value="C:nucleoplasm"/>
    <property type="evidence" value="ECO:0000314"/>
    <property type="project" value="HPA"/>
</dbReference>
<dbReference type="GO" id="GO:0003682">
    <property type="term" value="F:chromatin binding"/>
    <property type="evidence" value="ECO:0007669"/>
    <property type="project" value="InterPro"/>
</dbReference>
<dbReference type="CDD" id="cd04714">
    <property type="entry name" value="BAH_BAHCC1"/>
    <property type="match status" value="1"/>
</dbReference>
<dbReference type="CDD" id="cd20469">
    <property type="entry name" value="Tudor_TNRC18"/>
    <property type="match status" value="1"/>
</dbReference>
<dbReference type="FunFam" id="2.30.30.490:FF:000014">
    <property type="entry name" value="trinucleotide repeat-containing gene 18 protein-like"/>
    <property type="match status" value="1"/>
</dbReference>
<dbReference type="Gene3D" id="2.30.30.140">
    <property type="match status" value="1"/>
</dbReference>
<dbReference type="Gene3D" id="2.30.30.490">
    <property type="match status" value="1"/>
</dbReference>
<dbReference type="InterPro" id="IPR001025">
    <property type="entry name" value="BAH_dom"/>
</dbReference>
<dbReference type="InterPro" id="IPR052429">
    <property type="entry name" value="BAH_domain_protein"/>
</dbReference>
<dbReference type="InterPro" id="IPR043151">
    <property type="entry name" value="BAH_sf"/>
</dbReference>
<dbReference type="InterPro" id="IPR048924">
    <property type="entry name" value="BAHCC1-like_Tudor"/>
</dbReference>
<dbReference type="InterPro" id="IPR056841">
    <property type="entry name" value="TNRC18_BAHCC1-like_SH3"/>
</dbReference>
<dbReference type="PANTHER" id="PTHR12505">
    <property type="entry name" value="PHD FINGER TRANSCRIPTION FACTOR"/>
    <property type="match status" value="1"/>
</dbReference>
<dbReference type="PANTHER" id="PTHR12505:SF21">
    <property type="entry name" value="TRINUCLEOTIDE REPEAT-CONTAINING GENE 18 PROTEIN"/>
    <property type="match status" value="1"/>
</dbReference>
<dbReference type="Pfam" id="PF01426">
    <property type="entry name" value="BAH"/>
    <property type="match status" value="1"/>
</dbReference>
<dbReference type="Pfam" id="PF21744">
    <property type="entry name" value="BAHCC1-like_Tudor"/>
    <property type="match status" value="1"/>
</dbReference>
<dbReference type="Pfam" id="PF24912">
    <property type="entry name" value="SH3_TNRC18"/>
    <property type="match status" value="1"/>
</dbReference>
<dbReference type="SMART" id="SM00439">
    <property type="entry name" value="BAH"/>
    <property type="match status" value="1"/>
</dbReference>
<dbReference type="PROSITE" id="PS51038">
    <property type="entry name" value="BAH"/>
    <property type="match status" value="1"/>
</dbReference>
<proteinExistence type="evidence at protein level"/>
<organism>
    <name type="scientific">Homo sapiens</name>
    <name type="common">Human</name>
    <dbReference type="NCBI Taxonomy" id="9606"/>
    <lineage>
        <taxon>Eukaryota</taxon>
        <taxon>Metazoa</taxon>
        <taxon>Chordata</taxon>
        <taxon>Craniata</taxon>
        <taxon>Vertebrata</taxon>
        <taxon>Euteleostomi</taxon>
        <taxon>Mammalia</taxon>
        <taxon>Eutheria</taxon>
        <taxon>Euarchontoglires</taxon>
        <taxon>Primates</taxon>
        <taxon>Haplorrhini</taxon>
        <taxon>Catarrhini</taxon>
        <taxon>Hominidae</taxon>
        <taxon>Homo</taxon>
    </lineage>
</organism>